<protein>
    <recommendedName>
        <fullName evidence="1">Lipoprotein signal peptidase</fullName>
        <ecNumber evidence="1">3.4.23.36</ecNumber>
    </recommendedName>
    <alternativeName>
        <fullName evidence="1">Prolipoprotein signal peptidase</fullName>
    </alternativeName>
    <alternativeName>
        <fullName evidence="1">Signal peptidase II</fullName>
        <shortName evidence="1">SPase II</shortName>
    </alternativeName>
</protein>
<feature type="chain" id="PRO_0000178787" description="Lipoprotein signal peptidase">
    <location>
        <begin position="1"/>
        <end position="150"/>
    </location>
</feature>
<feature type="transmembrane region" description="Helical" evidence="1">
    <location>
        <begin position="5"/>
        <end position="25"/>
    </location>
</feature>
<feature type="transmembrane region" description="Helical" evidence="1">
    <location>
        <begin position="59"/>
        <end position="79"/>
    </location>
</feature>
<feature type="transmembrane region" description="Helical" evidence="1">
    <location>
        <begin position="83"/>
        <end position="103"/>
    </location>
</feature>
<feature type="transmembrane region" description="Helical" evidence="1">
    <location>
        <begin position="124"/>
        <end position="144"/>
    </location>
</feature>
<feature type="active site" evidence="1">
    <location>
        <position position="113"/>
    </location>
</feature>
<feature type="active site" evidence="1">
    <location>
        <position position="129"/>
    </location>
</feature>
<feature type="sequence conflict" description="In Ref. 1; AAB05811." evidence="2" ref="1">
    <original>FID</original>
    <variation>LLT</variation>
    <location>
        <begin position="102"/>
        <end position="104"/>
    </location>
</feature>
<gene>
    <name evidence="1" type="primary">lspA</name>
    <name type="synonym">lsp</name>
    <name type="synonym">lspL</name>
    <name type="ordered locus">llmg_1525</name>
</gene>
<comment type="function">
    <text evidence="1">This protein specifically catalyzes the removal of signal peptides from prolipoproteins.</text>
</comment>
<comment type="catalytic activity">
    <reaction evidence="1">
        <text>Release of signal peptides from bacterial membrane prolipoproteins. Hydrolyzes -Xaa-Yaa-Zaa-|-(S,diacylglyceryl)Cys-, in which Xaa is hydrophobic (preferably Leu), and Yaa (Ala or Ser) and Zaa (Gly or Ala) have small, neutral side chains.</text>
        <dbReference type="EC" id="3.4.23.36"/>
    </reaction>
</comment>
<comment type="pathway">
    <text evidence="1">Protein modification; lipoprotein biosynthesis (signal peptide cleavage).</text>
</comment>
<comment type="subcellular location">
    <subcellularLocation>
        <location evidence="1">Cell membrane</location>
        <topology evidence="1">Multi-pass membrane protein</topology>
    </subcellularLocation>
</comment>
<comment type="similarity">
    <text evidence="1 2">Belongs to the peptidase A8 family.</text>
</comment>
<comment type="sequence caution" evidence="2">
    <conflict type="frameshift">
        <sequence resource="EMBL-CDS" id="AAB05811"/>
    </conflict>
</comment>
<reference key="1">
    <citation type="submission" date="1996-07" db="EMBL/GenBank/DDBJ databases">
        <title>Cloning and characterization of the Lactococcus lactis signal peptidase type II (lsp) gene.</title>
        <authorList>
            <person name="Venema R."/>
            <person name="de Jong A."/>
            <person name="Van Dijl J.M."/>
            <person name="Venema G."/>
        </authorList>
    </citation>
    <scope>NUCLEOTIDE SEQUENCE [GENOMIC DNA]</scope>
</reference>
<reference key="2">
    <citation type="journal article" date="2007" name="J. Bacteriol.">
        <title>The complete genome sequence of the lactic acid bacterial paradigm Lactococcus lactis subsp. cremoris MG1363.</title>
        <authorList>
            <person name="Wegmann U."/>
            <person name="O'Connell-Motherway M."/>
            <person name="Zomer A."/>
            <person name="Buist G."/>
            <person name="Shearman C."/>
            <person name="Canchaya C."/>
            <person name="Ventura M."/>
            <person name="Goesmann A."/>
            <person name="Gasson M.J."/>
            <person name="Kuipers O.P."/>
            <person name="van Sinderen D."/>
            <person name="Kok J."/>
        </authorList>
    </citation>
    <scope>NUCLEOTIDE SEQUENCE [LARGE SCALE GENOMIC DNA]</scope>
    <source>
        <strain>MG1363</strain>
    </source>
</reference>
<evidence type="ECO:0000255" key="1">
    <source>
        <dbReference type="HAMAP-Rule" id="MF_00161"/>
    </source>
</evidence>
<evidence type="ECO:0000305" key="2"/>
<name>LSPA_LACLM</name>
<proteinExistence type="inferred from homology"/>
<keyword id="KW-0064">Aspartyl protease</keyword>
<keyword id="KW-1003">Cell membrane</keyword>
<keyword id="KW-0378">Hydrolase</keyword>
<keyword id="KW-0472">Membrane</keyword>
<keyword id="KW-0645">Protease</keyword>
<keyword id="KW-0812">Transmembrane</keyword>
<keyword id="KW-1133">Transmembrane helix</keyword>
<sequence length="150" mass="17052">MKKLLSLVIIVVGIIADQVFKNWVVANIQLGDTKKIWPDVLSLTYIKNDGAAWSSFSGQQWFFLVLTPIVLIVALWFLWKKMGQNWYFAGLTLIIAGALGNFIDRVRQGFVVDMFQTEFMDFPIFNIADILLSVGFVVLFIAILTDKETK</sequence>
<organism>
    <name type="scientific">Lactococcus lactis subsp. cremoris (strain MG1363)</name>
    <dbReference type="NCBI Taxonomy" id="416870"/>
    <lineage>
        <taxon>Bacteria</taxon>
        <taxon>Bacillati</taxon>
        <taxon>Bacillota</taxon>
        <taxon>Bacilli</taxon>
        <taxon>Lactobacillales</taxon>
        <taxon>Streptococcaceae</taxon>
        <taxon>Lactococcus</taxon>
        <taxon>Lactococcus cremoris subsp. cremoris</taxon>
    </lineage>
</organism>
<dbReference type="EC" id="3.4.23.36" evidence="1"/>
<dbReference type="EMBL" id="U63724">
    <property type="protein sequence ID" value="AAB05811.1"/>
    <property type="status" value="ALT_FRAME"/>
    <property type="molecule type" value="Genomic_DNA"/>
</dbReference>
<dbReference type="EMBL" id="AM406671">
    <property type="protein sequence ID" value="CAL98101.1"/>
    <property type="molecule type" value="Genomic_DNA"/>
</dbReference>
<dbReference type="RefSeq" id="WP_011835367.1">
    <property type="nucleotide sequence ID" value="NC_009004.1"/>
</dbReference>
<dbReference type="SMR" id="Q48729"/>
<dbReference type="STRING" id="416870.llmg_1525"/>
<dbReference type="KEGG" id="llm:llmg_1525"/>
<dbReference type="eggNOG" id="COG0597">
    <property type="taxonomic scope" value="Bacteria"/>
</dbReference>
<dbReference type="HOGENOM" id="CLU_083252_3_2_9"/>
<dbReference type="OrthoDB" id="9810259at2"/>
<dbReference type="PhylomeDB" id="Q48729"/>
<dbReference type="UniPathway" id="UPA00665"/>
<dbReference type="Proteomes" id="UP000000364">
    <property type="component" value="Chromosome"/>
</dbReference>
<dbReference type="GO" id="GO:0005886">
    <property type="term" value="C:plasma membrane"/>
    <property type="evidence" value="ECO:0007669"/>
    <property type="project" value="UniProtKB-SubCell"/>
</dbReference>
<dbReference type="GO" id="GO:0004190">
    <property type="term" value="F:aspartic-type endopeptidase activity"/>
    <property type="evidence" value="ECO:0007669"/>
    <property type="project" value="UniProtKB-UniRule"/>
</dbReference>
<dbReference type="GO" id="GO:0006508">
    <property type="term" value="P:proteolysis"/>
    <property type="evidence" value="ECO:0007669"/>
    <property type="project" value="UniProtKB-KW"/>
</dbReference>
<dbReference type="HAMAP" id="MF_00161">
    <property type="entry name" value="LspA"/>
    <property type="match status" value="1"/>
</dbReference>
<dbReference type="InterPro" id="IPR001872">
    <property type="entry name" value="Peptidase_A8"/>
</dbReference>
<dbReference type="NCBIfam" id="TIGR00077">
    <property type="entry name" value="lspA"/>
    <property type="match status" value="1"/>
</dbReference>
<dbReference type="PANTHER" id="PTHR33695">
    <property type="entry name" value="LIPOPROTEIN SIGNAL PEPTIDASE"/>
    <property type="match status" value="1"/>
</dbReference>
<dbReference type="PANTHER" id="PTHR33695:SF1">
    <property type="entry name" value="LIPOPROTEIN SIGNAL PEPTIDASE"/>
    <property type="match status" value="1"/>
</dbReference>
<dbReference type="Pfam" id="PF01252">
    <property type="entry name" value="Peptidase_A8"/>
    <property type="match status" value="1"/>
</dbReference>
<dbReference type="PRINTS" id="PR00781">
    <property type="entry name" value="LIPOSIGPTASE"/>
</dbReference>
<dbReference type="PROSITE" id="PS00855">
    <property type="entry name" value="SPASE_II"/>
    <property type="match status" value="1"/>
</dbReference>
<accession>Q48729</accession>
<accession>A2RLD4</accession>